<proteinExistence type="inferred from homology"/>
<name>VES_ECO27</name>
<evidence type="ECO:0000255" key="1">
    <source>
        <dbReference type="HAMAP-Rule" id="MF_01591"/>
    </source>
</evidence>
<reference key="1">
    <citation type="journal article" date="2009" name="J. Bacteriol.">
        <title>Complete genome sequence and comparative genome analysis of enteropathogenic Escherichia coli O127:H6 strain E2348/69.</title>
        <authorList>
            <person name="Iguchi A."/>
            <person name="Thomson N.R."/>
            <person name="Ogura Y."/>
            <person name="Saunders D."/>
            <person name="Ooka T."/>
            <person name="Henderson I.R."/>
            <person name="Harris D."/>
            <person name="Asadulghani M."/>
            <person name="Kurokawa K."/>
            <person name="Dean P."/>
            <person name="Kenny B."/>
            <person name="Quail M.A."/>
            <person name="Thurston S."/>
            <person name="Dougan G."/>
            <person name="Hayashi T."/>
            <person name="Parkhill J."/>
            <person name="Frankel G."/>
        </authorList>
    </citation>
    <scope>NUCLEOTIDE SEQUENCE [LARGE SCALE GENOMIC DNA]</scope>
    <source>
        <strain>E2348/69 / EPEC</strain>
    </source>
</reference>
<feature type="chain" id="PRO_1000185699" description="Protein Ves">
    <location>
        <begin position="1"/>
        <end position="191"/>
    </location>
</feature>
<dbReference type="EMBL" id="FM180568">
    <property type="protein sequence ID" value="CAS09418.1"/>
    <property type="molecule type" value="Genomic_DNA"/>
</dbReference>
<dbReference type="RefSeq" id="WP_001308689.1">
    <property type="nucleotide sequence ID" value="NC_011601.1"/>
</dbReference>
<dbReference type="SMR" id="B7USC3"/>
<dbReference type="KEGG" id="ecg:E2348C_1870"/>
<dbReference type="HOGENOM" id="CLU_090931_5_0_6"/>
<dbReference type="Proteomes" id="UP000008205">
    <property type="component" value="Chromosome"/>
</dbReference>
<dbReference type="CDD" id="cd20293">
    <property type="entry name" value="cupin_HutD_N"/>
    <property type="match status" value="1"/>
</dbReference>
<dbReference type="Gene3D" id="2.60.120.10">
    <property type="entry name" value="Jelly Rolls"/>
    <property type="match status" value="1"/>
</dbReference>
<dbReference type="HAMAP" id="MF_01591">
    <property type="entry name" value="Ves"/>
    <property type="match status" value="1"/>
</dbReference>
<dbReference type="InterPro" id="IPR014710">
    <property type="entry name" value="RmlC-like_jellyroll"/>
</dbReference>
<dbReference type="InterPro" id="IPR011051">
    <property type="entry name" value="RmlC_Cupin_sf"/>
</dbReference>
<dbReference type="InterPro" id="IPR010282">
    <property type="entry name" value="Uncharacterised_HutD/Ves"/>
</dbReference>
<dbReference type="InterPro" id="IPR023482">
    <property type="entry name" value="Uncharacterised_Ves"/>
</dbReference>
<dbReference type="NCBIfam" id="NF008488">
    <property type="entry name" value="PRK11396.1"/>
    <property type="match status" value="1"/>
</dbReference>
<dbReference type="PANTHER" id="PTHR37943">
    <property type="entry name" value="PROTEIN VES"/>
    <property type="match status" value="1"/>
</dbReference>
<dbReference type="PANTHER" id="PTHR37943:SF1">
    <property type="entry name" value="PROTEIN VES"/>
    <property type="match status" value="1"/>
</dbReference>
<dbReference type="Pfam" id="PF05962">
    <property type="entry name" value="HutD"/>
    <property type="match status" value="1"/>
</dbReference>
<dbReference type="SUPFAM" id="SSF51182">
    <property type="entry name" value="RmlC-like cupins"/>
    <property type="match status" value="1"/>
</dbReference>
<gene>
    <name evidence="1" type="primary">ves</name>
    <name type="ordered locus">E2348C_1870</name>
</gene>
<organism>
    <name type="scientific">Escherichia coli O127:H6 (strain E2348/69 / EPEC)</name>
    <dbReference type="NCBI Taxonomy" id="574521"/>
    <lineage>
        <taxon>Bacteria</taxon>
        <taxon>Pseudomonadati</taxon>
        <taxon>Pseudomonadota</taxon>
        <taxon>Gammaproteobacteria</taxon>
        <taxon>Enterobacterales</taxon>
        <taxon>Enterobacteriaceae</taxon>
        <taxon>Escherichia</taxon>
    </lineage>
</organism>
<sequence>MEYFDMRKMSVNLWRNAAGETREICTFPPAKRDFYWRASIASIAANGEFSLFPGMERIVTLLEGGEMFLESADRFNHTLKPLQPFAFAADQVVKAKLTAGQMSMDFNIMTRLDVCKAKVRIAERTFTTFGSRGGVVFVINGAWQLGDKLLTTDQGACWFDGRHTLRLLQPQGKLLFSEINWLAGYSPDQVQ</sequence>
<protein>
    <recommendedName>
        <fullName evidence="1">Protein Ves</fullName>
    </recommendedName>
</protein>
<keyword id="KW-1185">Reference proteome</keyword>
<comment type="similarity">
    <text evidence="1">Belongs to the Ves family.</text>
</comment>
<accession>B7USC3</accession>